<evidence type="ECO:0000250" key="1"/>
<evidence type="ECO:0000250" key="2">
    <source>
        <dbReference type="UniProtKB" id="Q12354"/>
    </source>
</evidence>
<evidence type="ECO:0000305" key="3"/>
<accession>Q5ASI2</accession>
<accession>C8V9Z3</accession>
<dbReference type="EC" id="3.1.2.-" evidence="2"/>
<dbReference type="EC" id="3.1.2.22" evidence="2"/>
<dbReference type="EMBL" id="AACD01000161">
    <property type="protein sequence ID" value="EAA60541.1"/>
    <property type="molecule type" value="Genomic_DNA"/>
</dbReference>
<dbReference type="EMBL" id="BN001303">
    <property type="protein sequence ID" value="CBF78105.1"/>
    <property type="molecule type" value="Genomic_DNA"/>
</dbReference>
<dbReference type="RefSeq" id="XP_682017.1">
    <property type="nucleotide sequence ID" value="XM_676925.1"/>
</dbReference>
<dbReference type="SMR" id="Q5ASI2"/>
<dbReference type="FunCoup" id="Q5ASI2">
    <property type="interactions" value="475"/>
</dbReference>
<dbReference type="STRING" id="227321.Q5ASI2"/>
<dbReference type="ESTHER" id="emeni-apth1">
    <property type="family name" value="LYsophospholipase_carboxylesterase"/>
</dbReference>
<dbReference type="MEROPS" id="S09.941"/>
<dbReference type="EnsemblFungi" id="CBF78105">
    <property type="protein sequence ID" value="CBF78105"/>
    <property type="gene ID" value="ANIA_08748"/>
</dbReference>
<dbReference type="KEGG" id="ani:ANIA_08748"/>
<dbReference type="VEuPathDB" id="FungiDB:AN8748"/>
<dbReference type="eggNOG" id="KOG2112">
    <property type="taxonomic scope" value="Eukaryota"/>
</dbReference>
<dbReference type="HOGENOM" id="CLU_049413_3_8_1"/>
<dbReference type="InParanoid" id="Q5ASI2"/>
<dbReference type="OMA" id="WYDILAM"/>
<dbReference type="OrthoDB" id="2418081at2759"/>
<dbReference type="Proteomes" id="UP000000560">
    <property type="component" value="Chromosome III"/>
</dbReference>
<dbReference type="GO" id="GO:0005737">
    <property type="term" value="C:cytoplasm"/>
    <property type="evidence" value="ECO:0000318"/>
    <property type="project" value="GO_Central"/>
</dbReference>
<dbReference type="GO" id="GO:0005634">
    <property type="term" value="C:nucleus"/>
    <property type="evidence" value="ECO:0007669"/>
    <property type="project" value="UniProtKB-SubCell"/>
</dbReference>
<dbReference type="GO" id="GO:0052689">
    <property type="term" value="F:carboxylic ester hydrolase activity"/>
    <property type="evidence" value="ECO:0000318"/>
    <property type="project" value="GO_Central"/>
</dbReference>
<dbReference type="GO" id="GO:0008474">
    <property type="term" value="F:palmitoyl-(protein) hydrolase activity"/>
    <property type="evidence" value="ECO:0000318"/>
    <property type="project" value="GO_Central"/>
</dbReference>
<dbReference type="GO" id="GO:0006631">
    <property type="term" value="P:fatty acid metabolic process"/>
    <property type="evidence" value="ECO:0007669"/>
    <property type="project" value="UniProtKB-KW"/>
</dbReference>
<dbReference type="FunFam" id="3.40.50.1820:FF:000010">
    <property type="entry name" value="Acyl-protein thioesterase 2"/>
    <property type="match status" value="1"/>
</dbReference>
<dbReference type="Gene3D" id="3.40.50.1820">
    <property type="entry name" value="alpha/beta hydrolase"/>
    <property type="match status" value="1"/>
</dbReference>
<dbReference type="InterPro" id="IPR029058">
    <property type="entry name" value="AB_hydrolase_fold"/>
</dbReference>
<dbReference type="InterPro" id="IPR050565">
    <property type="entry name" value="LYPA1-2/EST-like"/>
</dbReference>
<dbReference type="InterPro" id="IPR003140">
    <property type="entry name" value="PLipase/COase/thioEstase"/>
</dbReference>
<dbReference type="PANTHER" id="PTHR10655:SF17">
    <property type="entry name" value="LYSOPHOSPHOLIPASE-LIKE PROTEIN 1"/>
    <property type="match status" value="1"/>
</dbReference>
<dbReference type="PANTHER" id="PTHR10655">
    <property type="entry name" value="LYSOPHOSPHOLIPASE-RELATED"/>
    <property type="match status" value="1"/>
</dbReference>
<dbReference type="Pfam" id="PF02230">
    <property type="entry name" value="Abhydrolase_2"/>
    <property type="match status" value="1"/>
</dbReference>
<dbReference type="SUPFAM" id="SSF53474">
    <property type="entry name" value="alpha/beta-Hydrolases"/>
    <property type="match status" value="1"/>
</dbReference>
<comment type="function">
    <text evidence="2">Hydrolyzes fatty acids from S-acylated cysteine residues in proteins with a strong preference for palmitoylated G-alpha proteins over other acyl substrates. Mediates the deacylation of G-alpha proteins such as GPA1 in vivo, but has weak or no activity toward palmitoylated Ras proteins. Has weak lysophospholipase activity in vitro; however such activity may not exist in vivo.</text>
</comment>
<comment type="catalytic activity">
    <reaction evidence="2">
        <text>S-hexadecanoyl-L-cysteinyl-[protein] + H2O = L-cysteinyl-[protein] + hexadecanoate + H(+)</text>
        <dbReference type="Rhea" id="RHEA:19233"/>
        <dbReference type="Rhea" id="RHEA-COMP:10131"/>
        <dbReference type="Rhea" id="RHEA-COMP:11032"/>
        <dbReference type="ChEBI" id="CHEBI:7896"/>
        <dbReference type="ChEBI" id="CHEBI:15377"/>
        <dbReference type="ChEBI" id="CHEBI:15378"/>
        <dbReference type="ChEBI" id="CHEBI:29950"/>
        <dbReference type="ChEBI" id="CHEBI:74151"/>
        <dbReference type="EC" id="3.1.2.22"/>
    </reaction>
</comment>
<comment type="subcellular location">
    <subcellularLocation>
        <location evidence="2">Cytoplasm</location>
    </subcellularLocation>
    <subcellularLocation>
        <location evidence="2">Nucleus</location>
    </subcellularLocation>
</comment>
<comment type="similarity">
    <text evidence="3">Belongs to the AB hydrolase superfamily. AB hydrolase 2 family.</text>
</comment>
<reference key="1">
    <citation type="journal article" date="2005" name="Nature">
        <title>Sequencing of Aspergillus nidulans and comparative analysis with A. fumigatus and A. oryzae.</title>
        <authorList>
            <person name="Galagan J.E."/>
            <person name="Calvo S.E."/>
            <person name="Cuomo C."/>
            <person name="Ma L.-J."/>
            <person name="Wortman J.R."/>
            <person name="Batzoglou S."/>
            <person name="Lee S.-I."/>
            <person name="Bastuerkmen M."/>
            <person name="Spevak C.C."/>
            <person name="Clutterbuck J."/>
            <person name="Kapitonov V."/>
            <person name="Jurka J."/>
            <person name="Scazzocchio C."/>
            <person name="Farman M.L."/>
            <person name="Butler J."/>
            <person name="Purcell S."/>
            <person name="Harris S."/>
            <person name="Braus G.H."/>
            <person name="Draht O."/>
            <person name="Busch S."/>
            <person name="D'Enfert C."/>
            <person name="Bouchier C."/>
            <person name="Goldman G.H."/>
            <person name="Bell-Pedersen D."/>
            <person name="Griffiths-Jones S."/>
            <person name="Doonan J.H."/>
            <person name="Yu J."/>
            <person name="Vienken K."/>
            <person name="Pain A."/>
            <person name="Freitag M."/>
            <person name="Selker E.U."/>
            <person name="Archer D.B."/>
            <person name="Penalva M.A."/>
            <person name="Oakley B.R."/>
            <person name="Momany M."/>
            <person name="Tanaka T."/>
            <person name="Kumagai T."/>
            <person name="Asai K."/>
            <person name="Machida M."/>
            <person name="Nierman W.C."/>
            <person name="Denning D.W."/>
            <person name="Caddick M.X."/>
            <person name="Hynes M."/>
            <person name="Paoletti M."/>
            <person name="Fischer R."/>
            <person name="Miller B.L."/>
            <person name="Dyer P.S."/>
            <person name="Sachs M.S."/>
            <person name="Osmani S.A."/>
            <person name="Birren B.W."/>
        </authorList>
    </citation>
    <scope>NUCLEOTIDE SEQUENCE [LARGE SCALE GENOMIC DNA]</scope>
    <source>
        <strain>FGSC A4 / ATCC 38163 / CBS 112.46 / NRRL 194 / M139</strain>
    </source>
</reference>
<reference key="2">
    <citation type="journal article" date="2009" name="Fungal Genet. Biol.">
        <title>The 2008 update of the Aspergillus nidulans genome annotation: a community effort.</title>
        <authorList>
            <person name="Wortman J.R."/>
            <person name="Gilsenan J.M."/>
            <person name="Joardar V."/>
            <person name="Deegan J."/>
            <person name="Clutterbuck J."/>
            <person name="Andersen M.R."/>
            <person name="Archer D."/>
            <person name="Bencina M."/>
            <person name="Braus G."/>
            <person name="Coutinho P."/>
            <person name="von Dohren H."/>
            <person name="Doonan J."/>
            <person name="Driessen A.J."/>
            <person name="Durek P."/>
            <person name="Espeso E."/>
            <person name="Fekete E."/>
            <person name="Flipphi M."/>
            <person name="Estrada C.G."/>
            <person name="Geysens S."/>
            <person name="Goldman G."/>
            <person name="de Groot P.W."/>
            <person name="Hansen K."/>
            <person name="Harris S.D."/>
            <person name="Heinekamp T."/>
            <person name="Helmstaedt K."/>
            <person name="Henrissat B."/>
            <person name="Hofmann G."/>
            <person name="Homan T."/>
            <person name="Horio T."/>
            <person name="Horiuchi H."/>
            <person name="James S."/>
            <person name="Jones M."/>
            <person name="Karaffa L."/>
            <person name="Karanyi Z."/>
            <person name="Kato M."/>
            <person name="Keller N."/>
            <person name="Kelly D.E."/>
            <person name="Kiel J.A."/>
            <person name="Kim J.M."/>
            <person name="van der Klei I.J."/>
            <person name="Klis F.M."/>
            <person name="Kovalchuk A."/>
            <person name="Krasevec N."/>
            <person name="Kubicek C.P."/>
            <person name="Liu B."/>
            <person name="Maccabe A."/>
            <person name="Meyer V."/>
            <person name="Mirabito P."/>
            <person name="Miskei M."/>
            <person name="Mos M."/>
            <person name="Mullins J."/>
            <person name="Nelson D.R."/>
            <person name="Nielsen J."/>
            <person name="Oakley B.R."/>
            <person name="Osmani S.A."/>
            <person name="Pakula T."/>
            <person name="Paszewski A."/>
            <person name="Paulsen I."/>
            <person name="Pilsyk S."/>
            <person name="Pocsi I."/>
            <person name="Punt P.J."/>
            <person name="Ram A.F."/>
            <person name="Ren Q."/>
            <person name="Robellet X."/>
            <person name="Robson G."/>
            <person name="Seiboth B."/>
            <person name="van Solingen P."/>
            <person name="Specht T."/>
            <person name="Sun J."/>
            <person name="Taheri-Talesh N."/>
            <person name="Takeshita N."/>
            <person name="Ussery D."/>
            <person name="vanKuyk P.A."/>
            <person name="Visser H."/>
            <person name="van de Vondervoort P.J."/>
            <person name="de Vries R.P."/>
            <person name="Walton J."/>
            <person name="Xiang X."/>
            <person name="Xiong Y."/>
            <person name="Zeng A.P."/>
            <person name="Brandt B.W."/>
            <person name="Cornell M.J."/>
            <person name="van den Hondel C.A."/>
            <person name="Visser J."/>
            <person name="Oliver S.G."/>
            <person name="Turner G."/>
        </authorList>
    </citation>
    <scope>GENOME REANNOTATION</scope>
    <source>
        <strain>FGSC A4 / ATCC 38163 / CBS 112.46 / NRRL 194 / M139</strain>
    </source>
</reference>
<feature type="chain" id="PRO_0000229009" description="Acyl-protein thioesterase 1">
    <location>
        <begin position="1"/>
        <end position="239"/>
    </location>
</feature>
<feature type="active site" description="Charge relay system" evidence="1">
    <location>
        <position position="124"/>
    </location>
</feature>
<feature type="active site" description="Charge relay system" evidence="1">
    <location>
        <position position="180"/>
    </location>
</feature>
<feature type="active site" description="Charge relay system" evidence="1">
    <location>
        <position position="213"/>
    </location>
</feature>
<proteinExistence type="inferred from homology"/>
<gene>
    <name type="ORF">AN8748</name>
</gene>
<organism>
    <name type="scientific">Emericella nidulans (strain FGSC A4 / ATCC 38163 / CBS 112.46 / NRRL 194 / M139)</name>
    <name type="common">Aspergillus nidulans</name>
    <dbReference type="NCBI Taxonomy" id="227321"/>
    <lineage>
        <taxon>Eukaryota</taxon>
        <taxon>Fungi</taxon>
        <taxon>Dikarya</taxon>
        <taxon>Ascomycota</taxon>
        <taxon>Pezizomycotina</taxon>
        <taxon>Eurotiomycetes</taxon>
        <taxon>Eurotiomycetidae</taxon>
        <taxon>Eurotiales</taxon>
        <taxon>Aspergillaceae</taxon>
        <taxon>Aspergillus</taxon>
        <taxon>Aspergillus subgen. Nidulantes</taxon>
    </lineage>
</organism>
<protein>
    <recommendedName>
        <fullName>Acyl-protein thioesterase 1</fullName>
        <ecNumber evidence="2">3.1.2.-</ecNumber>
    </recommendedName>
    <alternativeName>
        <fullName>Palmitoyl-protein hydrolase</fullName>
        <ecNumber evidence="2">3.1.2.22</ecNumber>
    </alternativeName>
</protein>
<sequence length="239" mass="26553">MSRAPFIVPALKKHTATVIMAHGLGDSGAGWVSLAHNWRRRGLFEEVTFIFPNAPMIPITVNFGMSMPGWYDITKLGRDLDFQEAVKNQDEAGILKSRDYFNSLIKEQMDQGIKPSRIVLGGFSQGGAMSLFSGITGQEKLGGVFGLSCYMLLSDRIKNYIPENFPNKKTPFFLAHGTEDDIVPHEFGKRSAEMAKELGLEDVTFNSYKYLSHSADPVEIEDLEKFLDRVIPAENGGSL</sequence>
<keyword id="KW-0963">Cytoplasm</keyword>
<keyword id="KW-0276">Fatty acid metabolism</keyword>
<keyword id="KW-0378">Hydrolase</keyword>
<keyword id="KW-0443">Lipid metabolism</keyword>
<keyword id="KW-0539">Nucleus</keyword>
<keyword id="KW-1185">Reference proteome</keyword>
<keyword id="KW-0719">Serine esterase</keyword>
<name>APTH1_EMENI</name>